<feature type="chain" id="PRO_0000337832" description="Bifunctional protein GlmU">
    <location>
        <begin position="1"/>
        <end position="414"/>
    </location>
</feature>
<feature type="region of interest" description="Pyrophosphorylase">
    <location>
        <begin position="1"/>
        <end position="208"/>
    </location>
</feature>
<feature type="region of interest" description="Linker">
    <location>
        <begin position="209"/>
        <end position="228"/>
    </location>
</feature>
<feature type="region of interest" description="N-acetyltransferase">
    <location>
        <begin position="229"/>
        <end position="414"/>
    </location>
</feature>
<feature type="active site" description="Proton acceptor" evidence="1">
    <location>
        <position position="312"/>
    </location>
</feature>
<feature type="binding site" evidence="1">
    <location>
        <begin position="6"/>
        <end position="9"/>
    </location>
    <ligand>
        <name>UTP</name>
        <dbReference type="ChEBI" id="CHEBI:46398"/>
    </ligand>
</feature>
<feature type="binding site" evidence="1">
    <location>
        <position position="74"/>
    </location>
    <ligand>
        <name>UTP</name>
        <dbReference type="ChEBI" id="CHEBI:46398"/>
    </ligand>
</feature>
<feature type="binding site" evidence="1">
    <location>
        <position position="79"/>
    </location>
    <ligand>
        <name>UTP</name>
        <dbReference type="ChEBI" id="CHEBI:46398"/>
    </ligand>
</feature>
<feature type="binding site" evidence="1">
    <location>
        <position position="80"/>
    </location>
    <ligand>
        <name>N-acetyl-alpha-D-glucosamine 1-phosphate</name>
        <dbReference type="ChEBI" id="CHEBI:57776"/>
    </ligand>
</feature>
<feature type="binding site" evidence="1">
    <location>
        <position position="130"/>
    </location>
    <ligand>
        <name>N-acetyl-alpha-D-glucosamine 1-phosphate</name>
        <dbReference type="ChEBI" id="CHEBI:57776"/>
    </ligand>
</feature>
<feature type="binding site" evidence="1">
    <location>
        <position position="142"/>
    </location>
    <ligand>
        <name>N-acetyl-alpha-D-glucosamine 1-phosphate</name>
        <dbReference type="ChEBI" id="CHEBI:57776"/>
    </ligand>
</feature>
<feature type="binding site" evidence="1">
    <location>
        <position position="162"/>
    </location>
    <ligand>
        <name>N-acetyl-alpha-D-glucosamine 1-phosphate</name>
        <dbReference type="ChEBI" id="CHEBI:57776"/>
    </ligand>
</feature>
<feature type="binding site" evidence="1">
    <location>
        <position position="388"/>
    </location>
    <ligand>
        <name>acetyl-CoA</name>
        <dbReference type="ChEBI" id="CHEBI:57288"/>
    </ligand>
</feature>
<feature type="binding site" evidence="1">
    <location>
        <position position="405"/>
    </location>
    <ligand>
        <name>acetyl-CoA</name>
        <dbReference type="ChEBI" id="CHEBI:57288"/>
    </ligand>
</feature>
<comment type="function">
    <text evidence="1">Catalyzes the last two sequential reactions in the de novo biosynthetic pathway for UDP-N-acetyl-glucosamine (UDP-GlcNAc). Responsible for the acetylation of GlcN-1-P to GlcNAc-1-P, and for the uridyl transfer from UTP to GlcNAc-1-P, to produce UDP-GlcNAc and pyrophosphate (By similarity).</text>
</comment>
<comment type="catalytic activity">
    <reaction>
        <text>N-acetyl-alpha-D-glucosamine 1-phosphate + UTP + H(+) = UDP-N-acetyl-alpha-D-glucosamine + diphosphate</text>
        <dbReference type="Rhea" id="RHEA:13509"/>
        <dbReference type="ChEBI" id="CHEBI:15378"/>
        <dbReference type="ChEBI" id="CHEBI:33019"/>
        <dbReference type="ChEBI" id="CHEBI:46398"/>
        <dbReference type="ChEBI" id="CHEBI:57705"/>
        <dbReference type="ChEBI" id="CHEBI:57776"/>
        <dbReference type="EC" id="2.7.7.23"/>
    </reaction>
</comment>
<comment type="catalytic activity">
    <reaction>
        <text>alpha-D-glucosamine 1-phosphate + acetyl-CoA = N-acetyl-alpha-D-glucosamine 1-phosphate + CoA + H(+)</text>
        <dbReference type="Rhea" id="RHEA:13725"/>
        <dbReference type="ChEBI" id="CHEBI:15378"/>
        <dbReference type="ChEBI" id="CHEBI:57287"/>
        <dbReference type="ChEBI" id="CHEBI:57288"/>
        <dbReference type="ChEBI" id="CHEBI:57776"/>
        <dbReference type="ChEBI" id="CHEBI:58516"/>
        <dbReference type="EC" id="2.3.1.157"/>
    </reaction>
</comment>
<comment type="pathway">
    <text>Nucleotide-sugar biosynthesis; UDP-N-acetyl-alpha-D-glucosamine biosynthesis; N-acetyl-alpha-D-glucosamine 1-phosphate from alpha-D-glucosamine 6-phosphate (route II): step 2/2.</text>
</comment>
<comment type="pathway">
    <text>Nucleotide-sugar biosynthesis; UDP-N-acetyl-alpha-D-glucosamine biosynthesis; UDP-N-acetyl-alpha-D-glucosamine from N-acetyl-alpha-D-glucosamine 1-phosphate: step 1/1.</text>
</comment>
<comment type="similarity">
    <text evidence="2">In the N-terminal section; belongs to the N-acetylglucosamine-1-phosphate uridyltransferase family.</text>
</comment>
<comment type="similarity">
    <text evidence="2">In the C-terminal section; belongs to the transferase hexapeptide repeat family.</text>
</comment>
<protein>
    <recommendedName>
        <fullName>Bifunctional protein GlmU</fullName>
    </recommendedName>
    <domain>
        <recommendedName>
            <fullName>UDP-N-acetylglucosamine pyrophosphorylase</fullName>
            <ecNumber>2.7.7.23</ecNumber>
        </recommendedName>
        <alternativeName>
            <fullName>N-acetylglucosamine-1-phosphate uridyltransferase</fullName>
        </alternativeName>
    </domain>
    <domain>
        <recommendedName>
            <fullName>Glucosamine-1-phosphate N-acetyltransferase</fullName>
            <ecNumber>2.3.1.157</ecNumber>
        </recommendedName>
    </domain>
</protein>
<organism>
    <name type="scientific">Methanococcus vannielii (strain ATCC 35089 / DSM 1224 / JCM 13029 / OCM 148 / SB)</name>
    <dbReference type="NCBI Taxonomy" id="406327"/>
    <lineage>
        <taxon>Archaea</taxon>
        <taxon>Methanobacteriati</taxon>
        <taxon>Methanobacteriota</taxon>
        <taxon>Methanomada group</taxon>
        <taxon>Methanococci</taxon>
        <taxon>Methanococcales</taxon>
        <taxon>Methanococcaceae</taxon>
        <taxon>Methanococcus</taxon>
    </lineage>
</organism>
<evidence type="ECO:0000250" key="1"/>
<evidence type="ECO:0000305" key="2"/>
<reference key="1">
    <citation type="submission" date="2007-06" db="EMBL/GenBank/DDBJ databases">
        <title>Complete sequence of Methanococcus vannielii SB.</title>
        <authorList>
            <consortium name="US DOE Joint Genome Institute"/>
            <person name="Copeland A."/>
            <person name="Lucas S."/>
            <person name="Lapidus A."/>
            <person name="Barry K."/>
            <person name="Glavina del Rio T."/>
            <person name="Dalin E."/>
            <person name="Tice H."/>
            <person name="Pitluck S."/>
            <person name="Chain P."/>
            <person name="Malfatti S."/>
            <person name="Shin M."/>
            <person name="Vergez L."/>
            <person name="Schmutz J."/>
            <person name="Larimer F."/>
            <person name="Land M."/>
            <person name="Hauser L."/>
            <person name="Kyrpides N."/>
            <person name="Anderson I."/>
            <person name="Sieprawska-Lupa M."/>
            <person name="Whitman W.B."/>
            <person name="Richardson P."/>
        </authorList>
    </citation>
    <scope>NUCLEOTIDE SEQUENCE [LARGE SCALE GENOMIC DNA]</scope>
    <source>
        <strain>ATCC 35089 / DSM 1224 / JCM 13029 / OCM 148 / SB</strain>
    </source>
</reference>
<proteinExistence type="inferred from homology"/>
<accession>A6UP85</accession>
<sequence>MDAVILCAGSGTRLYPITENRPKPMIPIAGKPILEHIIEKIENHVEKIYLVVGFEKEKIIDYFYGNEKIEFIVQEKQLGTGHAVLMAKNYIKGDFLVLNGDVIFESDILEFLNYENAVGLSKVDNPENFGVIELGYDNKVINLLEKPNEDEIKSKFTSNLINAGIYKLENFVFEILENLLPSERGEIELTDALKKLIESSKLYGIELNGYWNDIGRPWDVLSANNYFLKNIMPKISGNIENNVTITGNVIIEEGVTVKSNSVIEGPVIIKSGAFIGPLAYIRPNTVLMEDTFVGNSSEIKGSIIMKNTKIPHLSYVGDSIIGSDCNFGCNTITANLRFDDEPVTLNIKGTKVKSVRKFGAVIGDNVKTGIQVSLMPGVKVGSNSIIGANCLVDKDIEKESFVYKKDELIIKKRN</sequence>
<keyword id="KW-0012">Acyltransferase</keyword>
<keyword id="KW-0511">Multifunctional enzyme</keyword>
<keyword id="KW-0548">Nucleotidyltransferase</keyword>
<keyword id="KW-0677">Repeat</keyword>
<keyword id="KW-0808">Transferase</keyword>
<gene>
    <name type="ordered locus">Mevan_0399</name>
</gene>
<name>GLMU_METVS</name>
<dbReference type="EC" id="2.7.7.23"/>
<dbReference type="EC" id="2.3.1.157"/>
<dbReference type="EMBL" id="CP000742">
    <property type="protein sequence ID" value="ABR54307.1"/>
    <property type="molecule type" value="Genomic_DNA"/>
</dbReference>
<dbReference type="RefSeq" id="WP_011972210.1">
    <property type="nucleotide sequence ID" value="NC_009634.1"/>
</dbReference>
<dbReference type="SMR" id="A6UP85"/>
<dbReference type="STRING" id="406327.Mevan_0399"/>
<dbReference type="GeneID" id="5325640"/>
<dbReference type="KEGG" id="mvn:Mevan_0399"/>
<dbReference type="eggNOG" id="arCOG00666">
    <property type="taxonomic scope" value="Archaea"/>
</dbReference>
<dbReference type="HOGENOM" id="CLU_029499_0_1_2"/>
<dbReference type="OrthoDB" id="15372at2157"/>
<dbReference type="UniPathway" id="UPA00113">
    <property type="reaction ID" value="UER00532"/>
</dbReference>
<dbReference type="UniPathway" id="UPA00113">
    <property type="reaction ID" value="UER00533"/>
</dbReference>
<dbReference type="Proteomes" id="UP000001107">
    <property type="component" value="Chromosome"/>
</dbReference>
<dbReference type="GO" id="GO:0019134">
    <property type="term" value="F:glucosamine-1-phosphate N-acetyltransferase activity"/>
    <property type="evidence" value="ECO:0007669"/>
    <property type="project" value="UniProtKB-EC"/>
</dbReference>
<dbReference type="GO" id="GO:0003977">
    <property type="term" value="F:UDP-N-acetylglucosamine diphosphorylase activity"/>
    <property type="evidence" value="ECO:0007669"/>
    <property type="project" value="UniProtKB-EC"/>
</dbReference>
<dbReference type="GO" id="GO:0006048">
    <property type="term" value="P:UDP-N-acetylglucosamine biosynthetic process"/>
    <property type="evidence" value="ECO:0007669"/>
    <property type="project" value="UniProtKB-UniPathway"/>
</dbReference>
<dbReference type="CDD" id="cd05636">
    <property type="entry name" value="LbH_G1P_TT_C_like"/>
    <property type="match status" value="1"/>
</dbReference>
<dbReference type="CDD" id="cd04181">
    <property type="entry name" value="NTP_transferase"/>
    <property type="match status" value="1"/>
</dbReference>
<dbReference type="Gene3D" id="2.160.10.10">
    <property type="entry name" value="Hexapeptide repeat proteins"/>
    <property type="match status" value="1"/>
</dbReference>
<dbReference type="Gene3D" id="3.90.550.10">
    <property type="entry name" value="Spore Coat Polysaccharide Biosynthesis Protein SpsA, Chain A"/>
    <property type="match status" value="1"/>
</dbReference>
<dbReference type="InterPro" id="IPR023915">
    <property type="entry name" value="Bifunctiontional_GlmU_arc-type"/>
</dbReference>
<dbReference type="InterPro" id="IPR050065">
    <property type="entry name" value="GlmU-like"/>
</dbReference>
<dbReference type="InterPro" id="IPR001451">
    <property type="entry name" value="Hexapep"/>
</dbReference>
<dbReference type="InterPro" id="IPR005835">
    <property type="entry name" value="NTP_transferase_dom"/>
</dbReference>
<dbReference type="InterPro" id="IPR029044">
    <property type="entry name" value="Nucleotide-diphossugar_trans"/>
</dbReference>
<dbReference type="InterPro" id="IPR011004">
    <property type="entry name" value="Trimer_LpxA-like_sf"/>
</dbReference>
<dbReference type="NCBIfam" id="TIGR03992">
    <property type="entry name" value="Arch_glmU"/>
    <property type="match status" value="1"/>
</dbReference>
<dbReference type="PANTHER" id="PTHR43584:SF8">
    <property type="entry name" value="N-ACETYLMURAMATE ALPHA-1-PHOSPHATE URIDYLYLTRANSFERASE"/>
    <property type="match status" value="1"/>
</dbReference>
<dbReference type="PANTHER" id="PTHR43584">
    <property type="entry name" value="NUCLEOTIDYL TRANSFERASE"/>
    <property type="match status" value="1"/>
</dbReference>
<dbReference type="Pfam" id="PF00132">
    <property type="entry name" value="Hexapep"/>
    <property type="match status" value="1"/>
</dbReference>
<dbReference type="Pfam" id="PF00483">
    <property type="entry name" value="NTP_transferase"/>
    <property type="match status" value="1"/>
</dbReference>
<dbReference type="SUPFAM" id="SSF53448">
    <property type="entry name" value="Nucleotide-diphospho-sugar transferases"/>
    <property type="match status" value="1"/>
</dbReference>
<dbReference type="SUPFAM" id="SSF51161">
    <property type="entry name" value="Trimeric LpxA-like enzymes"/>
    <property type="match status" value="1"/>
</dbReference>